<proteinExistence type="inferred from homology"/>
<organism>
    <name type="scientific">Symbiobacterium thermophilum (strain DSM 24528 / JCM 14929 / IAM 14863 / T)</name>
    <dbReference type="NCBI Taxonomy" id="292459"/>
    <lineage>
        <taxon>Bacteria</taxon>
        <taxon>Bacillati</taxon>
        <taxon>Bacillota</taxon>
        <taxon>Clostridia</taxon>
        <taxon>Eubacteriales</taxon>
        <taxon>Symbiobacteriaceae</taxon>
        <taxon>Symbiobacterium</taxon>
    </lineage>
</organism>
<accession>Q67KJ1</accession>
<protein>
    <recommendedName>
        <fullName evidence="1">Aspartyl/glutamyl-tRNA(Asn/Gln) amidotransferase subunit C</fullName>
        <shortName evidence="1">Asp/Glu-ADT subunit C</shortName>
        <ecNumber evidence="1">6.3.5.-</ecNumber>
    </recommendedName>
</protein>
<feature type="chain" id="PRO_1000076201" description="Aspartyl/glutamyl-tRNA(Asn/Gln) amidotransferase subunit C">
    <location>
        <begin position="1"/>
        <end position="96"/>
    </location>
</feature>
<sequence length="96" mass="10843">MAVTRDEIQRVARLARLSLSEEEIETFAEQLNRILEHVERINRLDVADVPPTYHGVALQHPFREDKPLPSLDREAVLALAPEAEAGCYKVPKITEG</sequence>
<comment type="function">
    <text evidence="1">Allows the formation of correctly charged Asn-tRNA(Asn) or Gln-tRNA(Gln) through the transamidation of misacylated Asp-tRNA(Asn) or Glu-tRNA(Gln) in organisms which lack either or both of asparaginyl-tRNA or glutaminyl-tRNA synthetases. The reaction takes place in the presence of glutamine and ATP through an activated phospho-Asp-tRNA(Asn) or phospho-Glu-tRNA(Gln).</text>
</comment>
<comment type="catalytic activity">
    <reaction evidence="1">
        <text>L-glutamyl-tRNA(Gln) + L-glutamine + ATP + H2O = L-glutaminyl-tRNA(Gln) + L-glutamate + ADP + phosphate + H(+)</text>
        <dbReference type="Rhea" id="RHEA:17521"/>
        <dbReference type="Rhea" id="RHEA-COMP:9681"/>
        <dbReference type="Rhea" id="RHEA-COMP:9684"/>
        <dbReference type="ChEBI" id="CHEBI:15377"/>
        <dbReference type="ChEBI" id="CHEBI:15378"/>
        <dbReference type="ChEBI" id="CHEBI:29985"/>
        <dbReference type="ChEBI" id="CHEBI:30616"/>
        <dbReference type="ChEBI" id="CHEBI:43474"/>
        <dbReference type="ChEBI" id="CHEBI:58359"/>
        <dbReference type="ChEBI" id="CHEBI:78520"/>
        <dbReference type="ChEBI" id="CHEBI:78521"/>
        <dbReference type="ChEBI" id="CHEBI:456216"/>
    </reaction>
</comment>
<comment type="catalytic activity">
    <reaction evidence="1">
        <text>L-aspartyl-tRNA(Asn) + L-glutamine + ATP + H2O = L-asparaginyl-tRNA(Asn) + L-glutamate + ADP + phosphate + 2 H(+)</text>
        <dbReference type="Rhea" id="RHEA:14513"/>
        <dbReference type="Rhea" id="RHEA-COMP:9674"/>
        <dbReference type="Rhea" id="RHEA-COMP:9677"/>
        <dbReference type="ChEBI" id="CHEBI:15377"/>
        <dbReference type="ChEBI" id="CHEBI:15378"/>
        <dbReference type="ChEBI" id="CHEBI:29985"/>
        <dbReference type="ChEBI" id="CHEBI:30616"/>
        <dbReference type="ChEBI" id="CHEBI:43474"/>
        <dbReference type="ChEBI" id="CHEBI:58359"/>
        <dbReference type="ChEBI" id="CHEBI:78515"/>
        <dbReference type="ChEBI" id="CHEBI:78516"/>
        <dbReference type="ChEBI" id="CHEBI:456216"/>
    </reaction>
</comment>
<comment type="subunit">
    <text evidence="1">Heterotrimer of A, B and C subunits.</text>
</comment>
<comment type="similarity">
    <text evidence="1">Belongs to the GatC family.</text>
</comment>
<reference key="1">
    <citation type="journal article" date="2004" name="Nucleic Acids Res.">
        <title>Genome sequence of Symbiobacterium thermophilum, an uncultivable bacterium that depends on microbial commensalism.</title>
        <authorList>
            <person name="Ueda K."/>
            <person name="Yamashita A."/>
            <person name="Ishikawa J."/>
            <person name="Shimada M."/>
            <person name="Watsuji T."/>
            <person name="Morimura K."/>
            <person name="Ikeda H."/>
            <person name="Hattori M."/>
            <person name="Beppu T."/>
        </authorList>
    </citation>
    <scope>NUCLEOTIDE SEQUENCE [LARGE SCALE GENOMIC DNA]</scope>
    <source>
        <strain>DSM 24528 / JCM 14929 / IAM 14863 / T</strain>
    </source>
</reference>
<gene>
    <name evidence="1" type="primary">gatC</name>
    <name type="ordered locus">STH2822</name>
</gene>
<dbReference type="EC" id="6.3.5.-" evidence="1"/>
<dbReference type="EMBL" id="AP006840">
    <property type="protein sequence ID" value="BAD41807.1"/>
    <property type="molecule type" value="Genomic_DNA"/>
</dbReference>
<dbReference type="RefSeq" id="WP_011196941.1">
    <property type="nucleotide sequence ID" value="NC_006177.1"/>
</dbReference>
<dbReference type="SMR" id="Q67KJ1"/>
<dbReference type="STRING" id="292459.STH2822"/>
<dbReference type="KEGG" id="sth:STH2822"/>
<dbReference type="eggNOG" id="COG0721">
    <property type="taxonomic scope" value="Bacteria"/>
</dbReference>
<dbReference type="HOGENOM" id="CLU_105899_1_2_9"/>
<dbReference type="OrthoDB" id="9813938at2"/>
<dbReference type="Proteomes" id="UP000000417">
    <property type="component" value="Chromosome"/>
</dbReference>
<dbReference type="GO" id="GO:0050566">
    <property type="term" value="F:asparaginyl-tRNA synthase (glutamine-hydrolyzing) activity"/>
    <property type="evidence" value="ECO:0007669"/>
    <property type="project" value="RHEA"/>
</dbReference>
<dbReference type="GO" id="GO:0005524">
    <property type="term" value="F:ATP binding"/>
    <property type="evidence" value="ECO:0007669"/>
    <property type="project" value="UniProtKB-KW"/>
</dbReference>
<dbReference type="GO" id="GO:0050567">
    <property type="term" value="F:glutaminyl-tRNA synthase (glutamine-hydrolyzing) activity"/>
    <property type="evidence" value="ECO:0007669"/>
    <property type="project" value="UniProtKB-UniRule"/>
</dbReference>
<dbReference type="GO" id="GO:0070681">
    <property type="term" value="P:glutaminyl-tRNAGln biosynthesis via transamidation"/>
    <property type="evidence" value="ECO:0007669"/>
    <property type="project" value="TreeGrafter"/>
</dbReference>
<dbReference type="GO" id="GO:0006450">
    <property type="term" value="P:regulation of translational fidelity"/>
    <property type="evidence" value="ECO:0007669"/>
    <property type="project" value="InterPro"/>
</dbReference>
<dbReference type="GO" id="GO:0006412">
    <property type="term" value="P:translation"/>
    <property type="evidence" value="ECO:0007669"/>
    <property type="project" value="UniProtKB-UniRule"/>
</dbReference>
<dbReference type="Gene3D" id="1.10.20.60">
    <property type="entry name" value="Glu-tRNAGln amidotransferase C subunit, N-terminal domain"/>
    <property type="match status" value="1"/>
</dbReference>
<dbReference type="HAMAP" id="MF_00122">
    <property type="entry name" value="GatC"/>
    <property type="match status" value="1"/>
</dbReference>
<dbReference type="InterPro" id="IPR036113">
    <property type="entry name" value="Asp/Glu-ADT_sf_sub_c"/>
</dbReference>
<dbReference type="InterPro" id="IPR003837">
    <property type="entry name" value="GatC"/>
</dbReference>
<dbReference type="NCBIfam" id="TIGR00135">
    <property type="entry name" value="gatC"/>
    <property type="match status" value="1"/>
</dbReference>
<dbReference type="PANTHER" id="PTHR15004">
    <property type="entry name" value="GLUTAMYL-TRNA(GLN) AMIDOTRANSFERASE SUBUNIT C, MITOCHONDRIAL"/>
    <property type="match status" value="1"/>
</dbReference>
<dbReference type="PANTHER" id="PTHR15004:SF0">
    <property type="entry name" value="GLUTAMYL-TRNA(GLN) AMIDOTRANSFERASE SUBUNIT C, MITOCHONDRIAL"/>
    <property type="match status" value="1"/>
</dbReference>
<dbReference type="Pfam" id="PF02686">
    <property type="entry name" value="GatC"/>
    <property type="match status" value="1"/>
</dbReference>
<dbReference type="SUPFAM" id="SSF141000">
    <property type="entry name" value="Glu-tRNAGln amidotransferase C subunit"/>
    <property type="match status" value="1"/>
</dbReference>
<name>GATC_SYMTH</name>
<evidence type="ECO:0000255" key="1">
    <source>
        <dbReference type="HAMAP-Rule" id="MF_00122"/>
    </source>
</evidence>
<keyword id="KW-0067">ATP-binding</keyword>
<keyword id="KW-0436">Ligase</keyword>
<keyword id="KW-0547">Nucleotide-binding</keyword>
<keyword id="KW-0648">Protein biosynthesis</keyword>
<keyword id="KW-1185">Reference proteome</keyword>